<gene>
    <name type="primary">OPY1</name>
    <name type="ordered locus">YBR129C</name>
    <name type="ORF">YBR1004</name>
</gene>
<proteinExistence type="evidence at protein level"/>
<name>OPY1_YEAST</name>
<accession>P38271</accession>
<accession>D6VQC6</accession>
<organism>
    <name type="scientific">Saccharomyces cerevisiae (strain ATCC 204508 / S288c)</name>
    <name type="common">Baker's yeast</name>
    <dbReference type="NCBI Taxonomy" id="559292"/>
    <lineage>
        <taxon>Eukaryota</taxon>
        <taxon>Fungi</taxon>
        <taxon>Dikarya</taxon>
        <taxon>Ascomycota</taxon>
        <taxon>Saccharomycotina</taxon>
        <taxon>Saccharomycetes</taxon>
        <taxon>Saccharomycetales</taxon>
        <taxon>Saccharomycetaceae</taxon>
        <taxon>Saccharomyces</taxon>
    </lineage>
</organism>
<keyword id="KW-1003">Cell membrane</keyword>
<keyword id="KW-0963">Cytoplasm</keyword>
<keyword id="KW-0472">Membrane</keyword>
<keyword id="KW-1185">Reference proteome</keyword>
<feature type="chain" id="PRO_0000058074" description="Pleckstrin homology domain protein OPY1">
    <location>
        <begin position="1"/>
        <end position="328"/>
    </location>
</feature>
<feature type="domain" description="PH" evidence="1">
    <location>
        <begin position="215"/>
        <end position="318"/>
    </location>
</feature>
<feature type="region of interest" description="Disordered" evidence="2">
    <location>
        <begin position="19"/>
        <end position="52"/>
    </location>
</feature>
<feature type="region of interest" description="Required for targeting to the cell membrane" evidence="4">
    <location>
        <begin position="213"/>
        <end position="328"/>
    </location>
</feature>
<feature type="compositionally biased region" description="Polar residues" evidence="2">
    <location>
        <begin position="24"/>
        <end position="41"/>
    </location>
</feature>
<sequence>MIAGATAPSSQHEILIASNLIKKPSTSQNKTPTAQSSSGNNGAADGAPQGYHHHHHHHRHLWWPRTTDHQYWCVLRKNQFAYYKTRDEREAISVIPRFDILNFKISELDGILTVYTPSKDLIFKFPRGQNEKVGMELMHNWKIALEKFLSSPSGNESVTTGSDYDEEEDDDDLIVVDEKAGPSSSKHSCSLTMDEQLSREDKEFYRMFDPRNAEHQVCSGILYTKVKKKKLFNRAKWQKFNVELTNTSFNLYSFKTGKLKKSIKLDKIIDCIELDNNSKMKNDDTNFALITFDERLSFKAANDQDMVDWIINFKSGILIRKKLKAENI</sequence>
<comment type="function">
    <text evidence="4">Binds phosphatidylinositol 4,5-bisphosphate (PtdIns(4,5)P2/PIP2) at the cell membrane (PubMed:22562153). Negatively regulates the activity of phosphatidylinositol 4-phosphate 5-kinase MSS4 (PubMed:22562153).</text>
</comment>
<comment type="subunit">
    <text evidence="4">Interacts with MSS4 (via N-terminus); to negatively regulate MSS4 kinase activity.</text>
</comment>
<comment type="subcellular location">
    <subcellularLocation>
        <location evidence="4">Cell membrane</location>
        <topology evidence="5">Peripheral membrane protein</topology>
    </subcellularLocation>
    <subcellularLocation>
        <location evidence="4">Cytoplasm</location>
    </subcellularLocation>
</comment>
<comment type="domain">
    <text evidence="4">The PH domain interacts with membranes containing phosphatidylinositol 4,5-bisphosphate (PtdIns(4,5)P2/PIP2).</text>
</comment>
<comment type="disruption phenotype">
    <text evidence="4">Increases cellular level of phosphatidylinositol 4,5-bisphosphate (PtdIns(4,5)P2/PIP2).</text>
</comment>
<comment type="miscellaneous">
    <text evidence="3">Present with 1560 molecules/cell in log phase SD medium.</text>
</comment>
<reference key="1">
    <citation type="journal article" date="1997" name="Genetics">
        <title>Human CPR (cell cycle progression restoration) genes impart a Far-phenotype on yeast cells.</title>
        <authorList>
            <person name="Edwards M.C."/>
            <person name="Liegeois N."/>
            <person name="Horecka J."/>
            <person name="DePinho R.A."/>
            <person name="Sprague G.F. Jr."/>
            <person name="Tyers M."/>
            <person name="Elledge S.J."/>
        </authorList>
    </citation>
    <scope>NUCLEOTIDE SEQUENCE</scope>
</reference>
<reference key="2">
    <citation type="journal article" date="1994" name="Yeast">
        <title>The sequence of 29.7 kb from the right arm of chromosome II reveals 13 complete open reading frames, of which ten correspond to new genes.</title>
        <authorList>
            <person name="Becam A.-M."/>
            <person name="Cullin C."/>
            <person name="Grzybowska E."/>
            <person name="Lacroute F."/>
            <person name="Nasr F."/>
            <person name="Ozier-Kalogeropoulos O."/>
            <person name="Palucha A."/>
            <person name="Slonimski P.P."/>
            <person name="Zagulski M."/>
            <person name="Herbert C.J."/>
        </authorList>
    </citation>
    <scope>NUCLEOTIDE SEQUENCE [GENOMIC DNA]</scope>
    <source>
        <strain>ATCC 204508 / S288c</strain>
    </source>
</reference>
<reference key="3">
    <citation type="journal article" date="1994" name="EMBO J.">
        <title>Complete DNA sequence of yeast chromosome II.</title>
        <authorList>
            <person name="Feldmann H."/>
            <person name="Aigle M."/>
            <person name="Aljinovic G."/>
            <person name="Andre B."/>
            <person name="Baclet M.C."/>
            <person name="Barthe C."/>
            <person name="Baur A."/>
            <person name="Becam A.-M."/>
            <person name="Biteau N."/>
            <person name="Boles E."/>
            <person name="Brandt T."/>
            <person name="Brendel M."/>
            <person name="Brueckner M."/>
            <person name="Bussereau F."/>
            <person name="Christiansen C."/>
            <person name="Contreras R."/>
            <person name="Crouzet M."/>
            <person name="Cziepluch C."/>
            <person name="Demolis N."/>
            <person name="Delaveau T."/>
            <person name="Doignon F."/>
            <person name="Domdey H."/>
            <person name="Duesterhus S."/>
            <person name="Dubois E."/>
            <person name="Dujon B."/>
            <person name="El Bakkoury M."/>
            <person name="Entian K.-D."/>
            <person name="Feuermann M."/>
            <person name="Fiers W."/>
            <person name="Fobo G.M."/>
            <person name="Fritz C."/>
            <person name="Gassenhuber J."/>
            <person name="Glansdorff N."/>
            <person name="Goffeau A."/>
            <person name="Grivell L.A."/>
            <person name="de Haan M."/>
            <person name="Hein C."/>
            <person name="Herbert C.J."/>
            <person name="Hollenberg C.P."/>
            <person name="Holmstroem K."/>
            <person name="Jacq C."/>
            <person name="Jacquet M."/>
            <person name="Jauniaux J.-C."/>
            <person name="Jonniaux J.-L."/>
            <person name="Kallesoee T."/>
            <person name="Kiesau P."/>
            <person name="Kirchrath L."/>
            <person name="Koetter P."/>
            <person name="Korol S."/>
            <person name="Liebl S."/>
            <person name="Logghe M."/>
            <person name="Lohan A.J.E."/>
            <person name="Louis E.J."/>
            <person name="Li Z.Y."/>
            <person name="Maat M.J."/>
            <person name="Mallet L."/>
            <person name="Mannhaupt G."/>
            <person name="Messenguy F."/>
            <person name="Miosga T."/>
            <person name="Molemans F."/>
            <person name="Mueller S."/>
            <person name="Nasr F."/>
            <person name="Obermaier B."/>
            <person name="Perea J."/>
            <person name="Pierard A."/>
            <person name="Piravandi E."/>
            <person name="Pohl F.M."/>
            <person name="Pohl T.M."/>
            <person name="Potier S."/>
            <person name="Proft M."/>
            <person name="Purnelle B."/>
            <person name="Ramezani Rad M."/>
            <person name="Rieger M."/>
            <person name="Rose M."/>
            <person name="Schaaff-Gerstenschlaeger I."/>
            <person name="Scherens B."/>
            <person name="Schwarzlose C."/>
            <person name="Skala J."/>
            <person name="Slonimski P.P."/>
            <person name="Smits P.H.M."/>
            <person name="Souciet J.-L."/>
            <person name="Steensma H.Y."/>
            <person name="Stucka R."/>
            <person name="Urrestarazu L.A."/>
            <person name="van der Aart Q.J.M."/>
            <person name="Van Dyck L."/>
            <person name="Vassarotti A."/>
            <person name="Vetter I."/>
            <person name="Vierendeels F."/>
            <person name="Vissers S."/>
            <person name="Wagner G."/>
            <person name="de Wergifosse P."/>
            <person name="Wolfe K.H."/>
            <person name="Zagulski M."/>
            <person name="Zimmermann F.K."/>
            <person name="Mewes H.-W."/>
            <person name="Kleine K."/>
        </authorList>
    </citation>
    <scope>NUCLEOTIDE SEQUENCE [LARGE SCALE GENOMIC DNA]</scope>
    <source>
        <strain>ATCC 204508 / S288c</strain>
    </source>
</reference>
<reference key="4">
    <citation type="journal article" date="2014" name="G3 (Bethesda)">
        <title>The reference genome sequence of Saccharomyces cerevisiae: Then and now.</title>
        <authorList>
            <person name="Engel S.R."/>
            <person name="Dietrich F.S."/>
            <person name="Fisk D.G."/>
            <person name="Binkley G."/>
            <person name="Balakrishnan R."/>
            <person name="Costanzo M.C."/>
            <person name="Dwight S.S."/>
            <person name="Hitz B.C."/>
            <person name="Karra K."/>
            <person name="Nash R.S."/>
            <person name="Weng S."/>
            <person name="Wong E.D."/>
            <person name="Lloyd P."/>
            <person name="Skrzypek M.S."/>
            <person name="Miyasato S.R."/>
            <person name="Simison M."/>
            <person name="Cherry J.M."/>
        </authorList>
    </citation>
    <scope>GENOME REANNOTATION</scope>
    <source>
        <strain>ATCC 204508 / S288c</strain>
    </source>
</reference>
<reference key="5">
    <citation type="journal article" date="2003" name="Nature">
        <title>Global analysis of protein expression in yeast.</title>
        <authorList>
            <person name="Ghaemmaghami S."/>
            <person name="Huh W.-K."/>
            <person name="Bower K."/>
            <person name="Howson R.W."/>
            <person name="Belle A."/>
            <person name="Dephoure N."/>
            <person name="O'Shea E.K."/>
            <person name="Weissman J.S."/>
        </authorList>
    </citation>
    <scope>LEVEL OF PROTEIN EXPRESSION [LARGE SCALE ANALYSIS]</scope>
</reference>
<reference key="6">
    <citation type="journal article" date="2012" name="EMBO J.">
        <title>The dual PH domain protein Opy1 functions as a sensor and modulator of PtdIns(4,5)P(2) synthesis.</title>
        <authorList>
            <person name="Ling Y."/>
            <person name="Stefan C.J."/>
            <person name="Macgurn J.A."/>
            <person name="Audhya A."/>
            <person name="Emr S.D."/>
        </authorList>
    </citation>
    <scope>FUNCTION</scope>
    <scope>INTERACTION WITH MSS4</scope>
    <scope>SUBCELLULAR LOCATION</scope>
    <scope>DOMAIN PH</scope>
    <scope>DISRUPTION PHENOTYPE</scope>
</reference>
<dbReference type="EMBL" id="AF016262">
    <property type="protein sequence ID" value="AAB81505.1"/>
    <property type="molecule type" value="mRNA"/>
</dbReference>
<dbReference type="EMBL" id="X75891">
    <property type="protein sequence ID" value="CAA53488.1"/>
    <property type="molecule type" value="Genomic_DNA"/>
</dbReference>
<dbReference type="EMBL" id="Z35998">
    <property type="protein sequence ID" value="CAA85086.1"/>
    <property type="molecule type" value="Genomic_DNA"/>
</dbReference>
<dbReference type="EMBL" id="BK006936">
    <property type="protein sequence ID" value="DAA07246.1"/>
    <property type="molecule type" value="Genomic_DNA"/>
</dbReference>
<dbReference type="PIR" id="S45998">
    <property type="entry name" value="S45998"/>
</dbReference>
<dbReference type="RefSeq" id="NP_009687.1">
    <property type="nucleotide sequence ID" value="NM_001178477.1"/>
</dbReference>
<dbReference type="SMR" id="P38271"/>
<dbReference type="BioGRID" id="32830">
    <property type="interactions" value="101"/>
</dbReference>
<dbReference type="DIP" id="DIP-4768N"/>
<dbReference type="FunCoup" id="P38271">
    <property type="interactions" value="275"/>
</dbReference>
<dbReference type="IntAct" id="P38271">
    <property type="interactions" value="1"/>
</dbReference>
<dbReference type="STRING" id="4932.YBR129C"/>
<dbReference type="iPTMnet" id="P38271"/>
<dbReference type="PaxDb" id="4932-YBR129C"/>
<dbReference type="PeptideAtlas" id="P38271"/>
<dbReference type="EnsemblFungi" id="YBR129C_mRNA">
    <property type="protein sequence ID" value="YBR129C"/>
    <property type="gene ID" value="YBR129C"/>
</dbReference>
<dbReference type="GeneID" id="852426"/>
<dbReference type="KEGG" id="sce:YBR129C"/>
<dbReference type="AGR" id="SGD:S000000333"/>
<dbReference type="SGD" id="S000000333">
    <property type="gene designation" value="OPY1"/>
</dbReference>
<dbReference type="VEuPathDB" id="FungiDB:YBR129C"/>
<dbReference type="eggNOG" id="ENOG502S04D">
    <property type="taxonomic scope" value="Eukaryota"/>
</dbReference>
<dbReference type="HOGENOM" id="CLU_038624_0_0_1"/>
<dbReference type="InParanoid" id="P38271"/>
<dbReference type="OMA" id="GQFSYYK"/>
<dbReference type="OrthoDB" id="2157866at2759"/>
<dbReference type="BioCyc" id="YEAST:G3O-29084-MONOMER"/>
<dbReference type="Reactome" id="R-SCE-983695">
    <property type="pathway name" value="Antigen activates B Cell Receptor (BCR) leading to generation of second messengers"/>
</dbReference>
<dbReference type="BioGRID-ORCS" id="852426">
    <property type="hits" value="9 hits in 10 CRISPR screens"/>
</dbReference>
<dbReference type="PRO" id="PR:P38271"/>
<dbReference type="Proteomes" id="UP000002311">
    <property type="component" value="Chromosome II"/>
</dbReference>
<dbReference type="RNAct" id="P38271">
    <property type="molecule type" value="protein"/>
</dbReference>
<dbReference type="GO" id="GO:0005737">
    <property type="term" value="C:cytoplasm"/>
    <property type="evidence" value="ECO:0000314"/>
    <property type="project" value="SGD"/>
</dbReference>
<dbReference type="GO" id="GO:0005739">
    <property type="term" value="C:mitochondrion"/>
    <property type="evidence" value="ECO:0007005"/>
    <property type="project" value="SGD"/>
</dbReference>
<dbReference type="GO" id="GO:0005886">
    <property type="term" value="C:plasma membrane"/>
    <property type="evidence" value="ECO:0000314"/>
    <property type="project" value="SGD"/>
</dbReference>
<dbReference type="GO" id="GO:0043325">
    <property type="term" value="F:phosphatidylinositol-3,4-bisphosphate binding"/>
    <property type="evidence" value="ECO:0000318"/>
    <property type="project" value="GO_Central"/>
</dbReference>
<dbReference type="GO" id="GO:0005546">
    <property type="term" value="F:phosphatidylinositol-4,5-bisphosphate binding"/>
    <property type="evidence" value="ECO:0000314"/>
    <property type="project" value="SGD"/>
</dbReference>
<dbReference type="GO" id="GO:0005543">
    <property type="term" value="F:phospholipid binding"/>
    <property type="evidence" value="ECO:0000318"/>
    <property type="project" value="GO_Central"/>
</dbReference>
<dbReference type="GO" id="GO:1902647">
    <property type="term" value="P:negative regulation of 1-phosphatidyl-1D-myo-inositol 4,5-bisphosphate biosynthetic process"/>
    <property type="evidence" value="ECO:0000315"/>
    <property type="project" value="SGD"/>
</dbReference>
<dbReference type="FunFam" id="2.30.29.30:FF:000506">
    <property type="entry name" value="OPY1p protein"/>
    <property type="match status" value="1"/>
</dbReference>
<dbReference type="Gene3D" id="2.30.29.30">
    <property type="entry name" value="Pleckstrin-homology domain (PH domain)/Phosphotyrosine-binding domain (PTB)"/>
    <property type="match status" value="2"/>
</dbReference>
<dbReference type="InterPro" id="IPR016609">
    <property type="entry name" value="Opy1"/>
</dbReference>
<dbReference type="InterPro" id="IPR011993">
    <property type="entry name" value="PH-like_dom_sf"/>
</dbReference>
<dbReference type="InterPro" id="IPR001849">
    <property type="entry name" value="PH_domain"/>
</dbReference>
<dbReference type="Pfam" id="PF00169">
    <property type="entry name" value="PH"/>
    <property type="match status" value="1"/>
</dbReference>
<dbReference type="PIRSF" id="PIRSF013217">
    <property type="entry name" value="UCP013217_Opy1"/>
    <property type="match status" value="1"/>
</dbReference>
<dbReference type="SMART" id="SM00233">
    <property type="entry name" value="PH"/>
    <property type="match status" value="2"/>
</dbReference>
<dbReference type="SUPFAM" id="SSF50729">
    <property type="entry name" value="PH domain-like"/>
    <property type="match status" value="2"/>
</dbReference>
<dbReference type="PROSITE" id="PS50003">
    <property type="entry name" value="PH_DOMAIN"/>
    <property type="match status" value="1"/>
</dbReference>
<protein>
    <recommendedName>
        <fullName>Pleckstrin homology domain protein OPY1</fullName>
    </recommendedName>
    <alternativeName>
        <fullName>Overproduction-induced pheromone-resistant yeast protein 1</fullName>
    </alternativeName>
</protein>
<evidence type="ECO:0000255" key="1">
    <source>
        <dbReference type="PROSITE-ProRule" id="PRU00145"/>
    </source>
</evidence>
<evidence type="ECO:0000256" key="2">
    <source>
        <dbReference type="SAM" id="MobiDB-lite"/>
    </source>
</evidence>
<evidence type="ECO:0000269" key="3">
    <source>
    </source>
</evidence>
<evidence type="ECO:0000269" key="4">
    <source>
    </source>
</evidence>
<evidence type="ECO:0000305" key="5"/>